<comment type="function">
    <text evidence="4">Antimicrobial peptide with strong and moderate activity against the fungi B.cinerea (MIC=5 uM) and C.albicans (MIC=100 uM), the Gram-negative bacterium E.coli (MIC=200 uM) and the Gram-positive bacterium S.aureus (MIC=25 uM) (PubMed:21184791). Shows cytolytic activity against insect cell lines (PubMed:21184791). Has potent hemolytic activity against human erythrocytes (EC(50)=64 uM) (PubMed:21184791). In vivo, peptide injection in the vicinity of the head and thorax of lepidopteran larvae induces feeding disorder followed by death due to starvation (PubMed:21184791).</text>
</comment>
<comment type="subcellular location">
    <subcellularLocation>
        <location evidence="3">Secreted</location>
    </subcellularLocation>
    <subcellularLocation>
        <location evidence="1">Target cell membrane</location>
    </subcellularLocation>
    <text evidence="8">Has an amphipathic alpha-helical conformation.</text>
</comment>
<comment type="tissue specificity">
    <text evidence="7">Expressed by the venom gland.</text>
</comment>
<comment type="miscellaneous">
    <text evidence="7">May be a minor component of E.pomiformis venom.</text>
</comment>
<comment type="similarity">
    <text evidence="6">Belongs to the MCD family. Mastoparan subfamily.</text>
</comment>
<keyword id="KW-0027">Amidation</keyword>
<keyword id="KW-0044">Antibiotic</keyword>
<keyword id="KW-0929">Antimicrobial</keyword>
<keyword id="KW-0204">Cytolysis</keyword>
<keyword id="KW-0295">Fungicide</keyword>
<keyword id="KW-0391">Immunity</keyword>
<keyword id="KW-0399">Innate immunity</keyword>
<keyword id="KW-0472">Membrane</keyword>
<keyword id="KW-0677">Repeat</keyword>
<keyword id="KW-0964">Secreted</keyword>
<keyword id="KW-0732">Signal</keyword>
<keyword id="KW-1052">Target cell membrane</keyword>
<keyword id="KW-1053">Target membrane</keyword>
<keyword id="KW-0800">Toxin</keyword>
<organism>
    <name type="scientific">Eumenes pomiformis</name>
    <name type="common">Potter wasp</name>
    <name type="synonym">Vespa pomiformis</name>
    <dbReference type="NCBI Taxonomy" id="693051"/>
    <lineage>
        <taxon>Eukaryota</taxon>
        <taxon>Metazoa</taxon>
        <taxon>Ecdysozoa</taxon>
        <taxon>Arthropoda</taxon>
        <taxon>Hexapoda</taxon>
        <taxon>Insecta</taxon>
        <taxon>Pterygota</taxon>
        <taxon>Neoptera</taxon>
        <taxon>Endopterygota</taxon>
        <taxon>Hymenoptera</taxon>
        <taxon>Apocrita</taxon>
        <taxon>Aculeata</taxon>
        <taxon>Vespoidea</taxon>
        <taxon>Vespidae</taxon>
        <taxon>Eumeninae</taxon>
        <taxon>Eumenes</taxon>
    </lineage>
</organism>
<name>MASTB_EUMPO</name>
<sequence length="63" mass="6495">MRGTSFILFAVVVILGFLHGNAEPLANPEPSANPDPLANPDPLANPEAFDLLGLVKSVVSALG</sequence>
<evidence type="ECO:0000250" key="1">
    <source>
        <dbReference type="UniProtKB" id="P0CJ38"/>
    </source>
</evidence>
<evidence type="ECO:0000255" key="2"/>
<evidence type="ECO:0000269" key="3">
    <source>
    </source>
</evidence>
<evidence type="ECO:0000269" key="4">
    <source>
    </source>
</evidence>
<evidence type="ECO:0000303" key="5">
    <source>
    </source>
</evidence>
<evidence type="ECO:0000305" key="6"/>
<evidence type="ECO:0000305" key="7">
    <source>
    </source>
</evidence>
<evidence type="ECO:0000305" key="8">
    <source>
    </source>
</evidence>
<evidence type="ECO:0000312" key="9">
    <source>
        <dbReference type="EMBL" id="ACZ37394.1"/>
    </source>
</evidence>
<reference key="1">
    <citation type="journal article" date="2010" name="Toxicon">
        <title>Differential gene expression profiles in the venom gland/sac of Eumenes pomiformis (Hymenoptera: Eumenidae).</title>
        <authorList>
            <person name="Baek J.H."/>
            <person name="Lee S.H."/>
        </authorList>
    </citation>
    <scope>NUCLEOTIDE SEQUENCE [MRNA]</scope>
    <scope>PROBABLE AMIDATION AT LEU-62</scope>
    <source>
        <tissue>Venom gland</tissue>
    </source>
</reference>
<reference key="2">
    <citation type="journal article" date="2011" name="Peptides">
        <title>Venom peptides from solitary hunting wasps induce feeding disorder in lepidopteran larvae.</title>
        <authorList>
            <person name="Baek J.H."/>
            <person name="Ji Y."/>
            <person name="Shin J.S."/>
            <person name="Lee S."/>
            <person name="Lee S.H."/>
        </authorList>
    </citation>
    <scope>FUNCTION</scope>
    <scope>BIOASSAY</scope>
    <scope>SYNTHESIS OF 49-62</scope>
</reference>
<dbReference type="EMBL" id="GU136233">
    <property type="protein sequence ID" value="ACZ37394.1"/>
    <property type="molecule type" value="mRNA"/>
</dbReference>
<dbReference type="GO" id="GO:0005576">
    <property type="term" value="C:extracellular region"/>
    <property type="evidence" value="ECO:0007669"/>
    <property type="project" value="UniProtKB-SubCell"/>
</dbReference>
<dbReference type="GO" id="GO:0016020">
    <property type="term" value="C:membrane"/>
    <property type="evidence" value="ECO:0007669"/>
    <property type="project" value="UniProtKB-KW"/>
</dbReference>
<dbReference type="GO" id="GO:0044218">
    <property type="term" value="C:other organism cell membrane"/>
    <property type="evidence" value="ECO:0007669"/>
    <property type="project" value="UniProtKB-KW"/>
</dbReference>
<dbReference type="GO" id="GO:0090729">
    <property type="term" value="F:toxin activity"/>
    <property type="evidence" value="ECO:0007669"/>
    <property type="project" value="UniProtKB-KW"/>
</dbReference>
<dbReference type="GO" id="GO:0042742">
    <property type="term" value="P:defense response to bacterium"/>
    <property type="evidence" value="ECO:0007669"/>
    <property type="project" value="UniProtKB-KW"/>
</dbReference>
<dbReference type="GO" id="GO:0050832">
    <property type="term" value="P:defense response to fungus"/>
    <property type="evidence" value="ECO:0007669"/>
    <property type="project" value="UniProtKB-KW"/>
</dbReference>
<dbReference type="GO" id="GO:0045087">
    <property type="term" value="P:innate immune response"/>
    <property type="evidence" value="ECO:0007669"/>
    <property type="project" value="UniProtKB-KW"/>
</dbReference>
<dbReference type="GO" id="GO:0031640">
    <property type="term" value="P:killing of cells of another organism"/>
    <property type="evidence" value="ECO:0007669"/>
    <property type="project" value="UniProtKB-KW"/>
</dbReference>
<feature type="signal peptide" evidence="2">
    <location>
        <begin position="1"/>
        <end position="22"/>
    </location>
</feature>
<feature type="propeptide" id="PRO_0000453661" evidence="7">
    <location>
        <begin position="23"/>
        <end position="48"/>
    </location>
</feature>
<feature type="peptide" id="PRO_5003024564" description="Venom peptide 2b" evidence="7">
    <location>
        <begin position="49"/>
        <end position="62"/>
    </location>
</feature>
<feature type="repeat" description="AXPX 1" evidence="6">
    <location>
        <begin position="22"/>
        <end position="25"/>
    </location>
</feature>
<feature type="repeat" description="AXPX 2" evidence="6">
    <location>
        <begin position="26"/>
        <end position="29"/>
    </location>
</feature>
<feature type="repeat" description="AXPX 3" evidence="6">
    <location>
        <begin position="32"/>
        <end position="35"/>
    </location>
</feature>
<feature type="repeat" description="AXPX 4" evidence="6">
    <location>
        <begin position="38"/>
        <end position="41"/>
    </location>
</feature>
<feature type="repeat" description="AXPX 5" evidence="6">
    <location>
        <begin position="44"/>
        <end position="47"/>
    </location>
</feature>
<feature type="modified residue" description="Leucine amide" evidence="7">
    <location>
        <position position="62"/>
    </location>
</feature>
<proteinExistence type="evidence at protein level"/>
<accession>D1MEI8</accession>
<protein>
    <recommendedName>
        <fullName evidence="5">Venom peptide 2b</fullName>
        <shortName evidence="5">EpVP2b</shortName>
        <shortName evidence="9">VP2b</shortName>
    </recommendedName>
    <alternativeName>
        <fullName evidence="6">Eumenine mastoparan VP2b</fullName>
    </alternativeName>
</protein>